<reference key="1">
    <citation type="journal article" date="1985" name="J. Mol. Biol.">
        <title>Sequence determination and genetic content of the short unique region in the genome of herpes simplex virus type 1.</title>
        <authorList>
            <person name="McGeoch D.J."/>
            <person name="Dolan A."/>
            <person name="Donald S."/>
            <person name="Rixon F.J."/>
        </authorList>
    </citation>
    <scope>NUCLEOTIDE SEQUENCE [GENOMIC DNA]</scope>
</reference>
<reference key="2">
    <citation type="journal article" date="1988" name="J. Gen. Virol.">
        <title>The DNA sequences of the long repeat region and adjoining parts of the long unique region in the genome of herpes simplex virus type 1.</title>
        <authorList>
            <person name="Perry L.J."/>
            <person name="McGeoch D.J."/>
        </authorList>
    </citation>
    <scope>NUCLEOTIDE SEQUENCE [GENOMIC DNA]</scope>
</reference>
<reference key="3">
    <citation type="journal article" date="1999" name="Clin. Diagn. Lab. Immunol.">
        <title>Variability of the glycoprotein G gene in clinical isolates of herpes simplex virus type 1.</title>
        <authorList>
            <person name="Rekabdar E."/>
            <person name="Tunback P."/>
            <person name="Liljeqvist J.-A."/>
            <person name="Bergstroem T."/>
        </authorList>
    </citation>
    <scope>NUCLEOTIDE SEQUENCE [GENOMIC DNA]</scope>
</reference>
<reference key="4">
    <citation type="journal article" date="2006" name="Infect. Genet. Evol.">
        <title>Patterns of Eurasian HSV-1 molecular diversity and inferences of human migrations.</title>
        <authorList>
            <person name="Bowden R."/>
            <person name="Sakaoka H."/>
            <person name="Ward R."/>
            <person name="Donnelly P."/>
        </authorList>
    </citation>
    <scope>NUCLEOTIDE SEQUENCE [GENOMIC DNA]</scope>
    <source>
        <strain>Isolate SG007</strain>
        <strain>Isolate SG009</strain>
        <strain>Isolate SG010</strain>
        <strain>Isolate SK005</strain>
        <strain>Isolate SK013</strain>
        <strain>Isolate SK027</strain>
        <strain>Isolate SK095</strain>
        <strain>Isolate SK098</strain>
    </source>
</reference>
<reference key="5">
    <citation type="journal article" date="2007" name="Microbes Infect.">
        <title>Determination and analysis of the DNA sequence of highly attenuated herpes simplex virus type 1 mutant HF10, a potential oncolytic virus.</title>
        <authorList>
            <person name="Ushijima Y."/>
            <person name="Luo C."/>
            <person name="Goshima F."/>
            <person name="Yamauchi Y."/>
            <person name="Kimura H."/>
            <person name="Nishiyama Y."/>
        </authorList>
    </citation>
    <scope>NUCLEOTIDE SEQUENCE [LARGE SCALE GENOMIC DNA]</scope>
    <source>
        <strain>Nonneuroinvasive mutant HF10</strain>
    </source>
</reference>
<reference key="6">
    <citation type="submission" date="2008-12" db="EMBL/GenBank/DDBJ databases">
        <title>Herpes simplex virus type 1 bacterial artificial chromosome.</title>
        <authorList>
            <person name="Cunningham C."/>
            <person name="Davison A.J."/>
        </authorList>
    </citation>
    <scope>NUCLEOTIDE SEQUENCE [LARGE SCALE GENOMIC DNA]</scope>
    <source>
        <strain>17 syn+</strain>
    </source>
</reference>
<reference key="7">
    <citation type="journal article" date="2008" name="J. Virol.">
        <title>Comprehensive characterization of extracellular herpes simplex virus type 1 virions.</title>
        <authorList>
            <person name="Loret S."/>
            <person name="Guay G."/>
            <person name="Lippe R."/>
        </authorList>
    </citation>
    <scope>SUBCELLULAR LOCATION</scope>
    <source>
        <strain>F</strain>
    </source>
</reference>
<keyword id="KW-0325">Glycoprotein</keyword>
<keyword id="KW-0472">Membrane</keyword>
<keyword id="KW-1185">Reference proteome</keyword>
<keyword id="KW-0732">Signal</keyword>
<keyword id="KW-0812">Transmembrane</keyword>
<keyword id="KW-1133">Transmembrane helix</keyword>
<keyword id="KW-0261">Viral envelope protein</keyword>
<keyword id="KW-0946">Virion</keyword>
<gene>
    <name type="primary">gG</name>
    <name type="ORF">US4</name>
</gene>
<proteinExistence type="inferred from homology"/>
<protein>
    <recommendedName>
        <fullName>Envelope glycoprotein G</fullName>
        <shortName>gG</shortName>
    </recommendedName>
    <alternativeName>
        <fullName>gG-1</fullName>
    </alternativeName>
</protein>
<sequence length="238" mass="25239">MSQGAMRAVVPIIPFLLVLVGVSGVPTNVSSTTQPQLQTTGRPSHEAPNMTQTGTTDSPTAISLTTPDHTPPMPSIGLEEEEEEEGAGDGEHLEGGDGTRDTLPQSPGPAFPLAEDVEKDKPNRPVVPSPDPNNSPARPETSRPKTPPTIIGPLATRPTTRLTSKGRPLVPTPQHTPLFSFLTASPALDTLFVVSTVIHTLSFLCIGAMATHLCGGWSRRGRRTHPSVRYVCLPSERG</sequence>
<feature type="signal peptide" evidence="2">
    <location>
        <begin position="1"/>
        <end position="24"/>
    </location>
</feature>
<feature type="chain" id="PRO_0000115767" description="Envelope glycoprotein G">
    <location>
        <begin position="25"/>
        <end position="238"/>
    </location>
</feature>
<feature type="topological domain" description="Virion surface" evidence="2">
    <location>
        <begin position="25"/>
        <end position="189"/>
    </location>
</feature>
<feature type="transmembrane region" description="Helical" evidence="2">
    <location>
        <begin position="190"/>
        <end position="210"/>
    </location>
</feature>
<feature type="topological domain" description="Intravirion" evidence="2">
    <location>
        <begin position="211"/>
        <end position="238"/>
    </location>
</feature>
<feature type="region of interest" description="Disordered" evidence="3">
    <location>
        <begin position="28"/>
        <end position="171"/>
    </location>
</feature>
<feature type="compositionally biased region" description="Polar residues" evidence="3">
    <location>
        <begin position="28"/>
        <end position="42"/>
    </location>
</feature>
<feature type="compositionally biased region" description="Polar residues" evidence="3">
    <location>
        <begin position="49"/>
        <end position="68"/>
    </location>
</feature>
<feature type="compositionally biased region" description="Acidic residues" evidence="3">
    <location>
        <begin position="78"/>
        <end position="88"/>
    </location>
</feature>
<feature type="compositionally biased region" description="Basic and acidic residues" evidence="3">
    <location>
        <begin position="89"/>
        <end position="100"/>
    </location>
</feature>
<feature type="glycosylation site" description="N-linked (GlcNAc...) asparagine; by host" evidence="2">
    <location>
        <position position="28"/>
    </location>
</feature>
<feature type="glycosylation site" description="N-linked (GlcNAc...) asparagine; by host" evidence="2">
    <location>
        <position position="49"/>
    </location>
</feature>
<evidence type="ECO:0000250" key="1"/>
<evidence type="ECO:0000255" key="2"/>
<evidence type="ECO:0000256" key="3">
    <source>
        <dbReference type="SAM" id="MobiDB-lite"/>
    </source>
</evidence>
<evidence type="ECO:0000305" key="4"/>
<organism>
    <name type="scientific">Human herpesvirus 1 (strain 17)</name>
    <name type="common">HHV-1</name>
    <name type="synonym">Human herpes simplex virus 1</name>
    <dbReference type="NCBI Taxonomy" id="10299"/>
    <lineage>
        <taxon>Viruses</taxon>
        <taxon>Duplodnaviria</taxon>
        <taxon>Heunggongvirae</taxon>
        <taxon>Peploviricota</taxon>
        <taxon>Herviviricetes</taxon>
        <taxon>Herpesvirales</taxon>
        <taxon>Orthoherpesviridae</taxon>
        <taxon>Alphaherpesvirinae</taxon>
        <taxon>Simplexvirus</taxon>
        <taxon>Simplexvirus humanalpha1</taxon>
        <taxon>Human herpesvirus 1</taxon>
    </lineage>
</organism>
<accession>P06484</accession>
<accession>Q770H5</accession>
<organismHost>
    <name type="scientific">Homo sapiens</name>
    <name type="common">Human</name>
    <dbReference type="NCBI Taxonomy" id="9606"/>
</organismHost>
<comment type="function">
    <text evidence="1">Chemokine-binding protein that inhibits neutrophils' chemotaxis.</text>
</comment>
<comment type="subcellular location">
    <subcellularLocation>
        <location evidence="4">Virion membrane</location>
        <topology evidence="4">Single-pass type I membrane protein</topology>
    </subcellularLocation>
</comment>
<comment type="similarity">
    <text evidence="4">Belongs to the alphaherpesvirinae glycoprotein G family.</text>
</comment>
<name>GG_HHV11</name>
<dbReference type="EMBL" id="L00036">
    <property type="protein sequence ID" value="AAA96684.1"/>
    <property type="molecule type" value="Genomic_DNA"/>
</dbReference>
<dbReference type="EMBL" id="X14112">
    <property type="protein sequence ID" value="CAA32281.1"/>
    <property type="molecule type" value="Genomic_DNA"/>
</dbReference>
<dbReference type="EMBL" id="X02138">
    <property type="protein sequence ID" value="CAA26058.1"/>
    <property type="molecule type" value="Genomic_DNA"/>
</dbReference>
<dbReference type="EMBL" id="AF117122">
    <property type="protein sequence ID" value="AAD33228.1"/>
    <property type="molecule type" value="Genomic_DNA"/>
</dbReference>
<dbReference type="EMBL" id="AY240789">
    <property type="protein sequence ID" value="AAP39675.1"/>
    <property type="molecule type" value="Genomic_DNA"/>
</dbReference>
<dbReference type="EMBL" id="AY240790">
    <property type="protein sequence ID" value="AAP39678.1"/>
    <property type="molecule type" value="Genomic_DNA"/>
</dbReference>
<dbReference type="EMBL" id="AY240791">
    <property type="protein sequence ID" value="AAP39681.1"/>
    <property type="molecule type" value="Genomic_DNA"/>
</dbReference>
<dbReference type="EMBL" id="AY240794">
    <property type="protein sequence ID" value="AAP39690.1"/>
    <property type="molecule type" value="Genomic_DNA"/>
</dbReference>
<dbReference type="EMBL" id="AY240801">
    <property type="protein sequence ID" value="AAP39711.1"/>
    <property type="molecule type" value="Genomic_DNA"/>
</dbReference>
<dbReference type="EMBL" id="AY240811">
    <property type="protein sequence ID" value="AAP39741.1"/>
    <property type="molecule type" value="Genomic_DNA"/>
</dbReference>
<dbReference type="EMBL" id="AY240820">
    <property type="protein sequence ID" value="AAP39768.1"/>
    <property type="molecule type" value="Genomic_DNA"/>
</dbReference>
<dbReference type="EMBL" id="AY240823">
    <property type="protein sequence ID" value="AAP39777.1"/>
    <property type="molecule type" value="Genomic_DNA"/>
</dbReference>
<dbReference type="EMBL" id="DQ889502">
    <property type="protein sequence ID" value="ABI63522.1"/>
    <property type="molecule type" value="Genomic_DNA"/>
</dbReference>
<dbReference type="EMBL" id="FJ593289">
    <property type="protein sequence ID" value="ACM62293.1"/>
    <property type="molecule type" value="Genomic_DNA"/>
</dbReference>
<dbReference type="PIR" id="A05239">
    <property type="entry name" value="QQBE74"/>
</dbReference>
<dbReference type="RefSeq" id="YP_009137139.1">
    <property type="nucleotide sequence ID" value="NC_001806.2"/>
</dbReference>
<dbReference type="SMR" id="P06484"/>
<dbReference type="BioGRID" id="971434">
    <property type="interactions" value="34"/>
</dbReference>
<dbReference type="ChEMBL" id="CHEMBL2364696"/>
<dbReference type="DrugCentral" id="P06484"/>
<dbReference type="GlyCosmos" id="P06484">
    <property type="glycosylation" value="2 sites, No reported glycans"/>
</dbReference>
<dbReference type="DNASU" id="2703401"/>
<dbReference type="GeneID" id="2703404"/>
<dbReference type="KEGG" id="vg:2703404"/>
<dbReference type="PRO" id="PR:P06484"/>
<dbReference type="Proteomes" id="UP000009294">
    <property type="component" value="Segment"/>
</dbReference>
<dbReference type="Proteomes" id="UP000180652">
    <property type="component" value="Segment"/>
</dbReference>
<dbReference type="GO" id="GO:0016020">
    <property type="term" value="C:membrane"/>
    <property type="evidence" value="ECO:0007669"/>
    <property type="project" value="UniProtKB-KW"/>
</dbReference>
<dbReference type="GO" id="GO:0019031">
    <property type="term" value="C:viral envelope"/>
    <property type="evidence" value="ECO:0007669"/>
    <property type="project" value="UniProtKB-KW"/>
</dbReference>
<dbReference type="GO" id="GO:0055036">
    <property type="term" value="C:virion membrane"/>
    <property type="evidence" value="ECO:0007669"/>
    <property type="project" value="UniProtKB-SubCell"/>
</dbReference>
<dbReference type="GO" id="GO:0141135">
    <property type="term" value="P:symbiont-mediated suppression of host chemokine signal transduction pathway"/>
    <property type="evidence" value="ECO:0000269"/>
    <property type="project" value="SigSci"/>
</dbReference>